<keyword id="KW-0328">Glycosyltransferase</keyword>
<keyword id="KW-1185">Reference proteome</keyword>
<keyword id="KW-0808">Transferase</keyword>
<protein>
    <recommendedName>
        <fullName>Uncharacterized glycosyltransferase YqgM</fullName>
        <ecNumber>2.4.-.-</ecNumber>
    </recommendedName>
</protein>
<evidence type="ECO:0000305" key="1"/>
<comment type="similarity">
    <text evidence="1">Belongs to the glycosyltransferase group 1 family. Glycosyltransferase 4 subfamily.</text>
</comment>
<reference key="1">
    <citation type="journal article" date="1996" name="Microbiology">
        <title>Systematic sequencing of the 283 kb 210 degrees-232 degrees region of the Bacillus subtilis genome containing the skin element and many sporulation genes.</title>
        <authorList>
            <person name="Mizuno M."/>
            <person name="Masuda S."/>
            <person name="Takemaru K."/>
            <person name="Hosono S."/>
            <person name="Sato T."/>
            <person name="Takeuchi M."/>
            <person name="Kobayashi Y."/>
        </authorList>
    </citation>
    <scope>NUCLEOTIDE SEQUENCE [GENOMIC DNA]</scope>
    <source>
        <strain>168 / JH642</strain>
    </source>
</reference>
<reference key="2">
    <citation type="journal article" date="1997" name="Nature">
        <title>The complete genome sequence of the Gram-positive bacterium Bacillus subtilis.</title>
        <authorList>
            <person name="Kunst F."/>
            <person name="Ogasawara N."/>
            <person name="Moszer I."/>
            <person name="Albertini A.M."/>
            <person name="Alloni G."/>
            <person name="Azevedo V."/>
            <person name="Bertero M.G."/>
            <person name="Bessieres P."/>
            <person name="Bolotin A."/>
            <person name="Borchert S."/>
            <person name="Borriss R."/>
            <person name="Boursier L."/>
            <person name="Brans A."/>
            <person name="Braun M."/>
            <person name="Brignell S.C."/>
            <person name="Bron S."/>
            <person name="Brouillet S."/>
            <person name="Bruschi C.V."/>
            <person name="Caldwell B."/>
            <person name="Capuano V."/>
            <person name="Carter N.M."/>
            <person name="Choi S.-K."/>
            <person name="Codani J.-J."/>
            <person name="Connerton I.F."/>
            <person name="Cummings N.J."/>
            <person name="Daniel R.A."/>
            <person name="Denizot F."/>
            <person name="Devine K.M."/>
            <person name="Duesterhoeft A."/>
            <person name="Ehrlich S.D."/>
            <person name="Emmerson P.T."/>
            <person name="Entian K.-D."/>
            <person name="Errington J."/>
            <person name="Fabret C."/>
            <person name="Ferrari E."/>
            <person name="Foulger D."/>
            <person name="Fritz C."/>
            <person name="Fujita M."/>
            <person name="Fujita Y."/>
            <person name="Fuma S."/>
            <person name="Galizzi A."/>
            <person name="Galleron N."/>
            <person name="Ghim S.-Y."/>
            <person name="Glaser P."/>
            <person name="Goffeau A."/>
            <person name="Golightly E.J."/>
            <person name="Grandi G."/>
            <person name="Guiseppi G."/>
            <person name="Guy B.J."/>
            <person name="Haga K."/>
            <person name="Haiech J."/>
            <person name="Harwood C.R."/>
            <person name="Henaut A."/>
            <person name="Hilbert H."/>
            <person name="Holsappel S."/>
            <person name="Hosono S."/>
            <person name="Hullo M.-F."/>
            <person name="Itaya M."/>
            <person name="Jones L.-M."/>
            <person name="Joris B."/>
            <person name="Karamata D."/>
            <person name="Kasahara Y."/>
            <person name="Klaerr-Blanchard M."/>
            <person name="Klein C."/>
            <person name="Kobayashi Y."/>
            <person name="Koetter P."/>
            <person name="Koningstein G."/>
            <person name="Krogh S."/>
            <person name="Kumano M."/>
            <person name="Kurita K."/>
            <person name="Lapidus A."/>
            <person name="Lardinois S."/>
            <person name="Lauber J."/>
            <person name="Lazarevic V."/>
            <person name="Lee S.-M."/>
            <person name="Levine A."/>
            <person name="Liu H."/>
            <person name="Masuda S."/>
            <person name="Mauel C."/>
            <person name="Medigue C."/>
            <person name="Medina N."/>
            <person name="Mellado R.P."/>
            <person name="Mizuno M."/>
            <person name="Moestl D."/>
            <person name="Nakai S."/>
            <person name="Noback M."/>
            <person name="Noone D."/>
            <person name="O'Reilly M."/>
            <person name="Ogawa K."/>
            <person name="Ogiwara A."/>
            <person name="Oudega B."/>
            <person name="Park S.-H."/>
            <person name="Parro V."/>
            <person name="Pohl T.M."/>
            <person name="Portetelle D."/>
            <person name="Porwollik S."/>
            <person name="Prescott A.M."/>
            <person name="Presecan E."/>
            <person name="Pujic P."/>
            <person name="Purnelle B."/>
            <person name="Rapoport G."/>
            <person name="Rey M."/>
            <person name="Reynolds S."/>
            <person name="Rieger M."/>
            <person name="Rivolta C."/>
            <person name="Rocha E."/>
            <person name="Roche B."/>
            <person name="Rose M."/>
            <person name="Sadaie Y."/>
            <person name="Sato T."/>
            <person name="Scanlan E."/>
            <person name="Schleich S."/>
            <person name="Schroeter R."/>
            <person name="Scoffone F."/>
            <person name="Sekiguchi J."/>
            <person name="Sekowska A."/>
            <person name="Seror S.J."/>
            <person name="Serror P."/>
            <person name="Shin B.-S."/>
            <person name="Soldo B."/>
            <person name="Sorokin A."/>
            <person name="Tacconi E."/>
            <person name="Takagi T."/>
            <person name="Takahashi H."/>
            <person name="Takemaru K."/>
            <person name="Takeuchi M."/>
            <person name="Tamakoshi A."/>
            <person name="Tanaka T."/>
            <person name="Terpstra P."/>
            <person name="Tognoni A."/>
            <person name="Tosato V."/>
            <person name="Uchiyama S."/>
            <person name="Vandenbol M."/>
            <person name="Vannier F."/>
            <person name="Vassarotti A."/>
            <person name="Viari A."/>
            <person name="Wambutt R."/>
            <person name="Wedler E."/>
            <person name="Wedler H."/>
            <person name="Weitzenegger T."/>
            <person name="Winters P."/>
            <person name="Wipat A."/>
            <person name="Yamamoto H."/>
            <person name="Yamane K."/>
            <person name="Yasumoto K."/>
            <person name="Yata K."/>
            <person name="Yoshida K."/>
            <person name="Yoshikawa H.-F."/>
            <person name="Zumstein E."/>
            <person name="Yoshikawa H."/>
            <person name="Danchin A."/>
        </authorList>
    </citation>
    <scope>NUCLEOTIDE SEQUENCE [LARGE SCALE GENOMIC DNA]</scope>
    <source>
        <strain>168</strain>
    </source>
</reference>
<reference key="3">
    <citation type="journal article" date="2009" name="Microbiology">
        <title>From a consortium sequence to a unified sequence: the Bacillus subtilis 168 reference genome a decade later.</title>
        <authorList>
            <person name="Barbe V."/>
            <person name="Cruveiller S."/>
            <person name="Kunst F."/>
            <person name="Lenoble P."/>
            <person name="Meurice G."/>
            <person name="Sekowska A."/>
            <person name="Vallenet D."/>
            <person name="Wang T."/>
            <person name="Moszer I."/>
            <person name="Medigue C."/>
            <person name="Danchin A."/>
        </authorList>
    </citation>
    <scope>SEQUENCE REVISION TO 234</scope>
</reference>
<name>YQGM_BACSU</name>
<sequence length="359" mass="40816">MNILMLSPEHPDEPKSGLGVHLNRLISYLNPHINITVFTPSGQLFSYAKFEDYIADANFTMVRHVLSHNKRFDLIHAHDDTTAPAAQYLKQRLGLPLAATIHGLESERKKVCREAPHPYRLMTERLLIESADALIVLSTFMKRSLDKAAHKKITVIPSPASMEEEKGKIPRSMNRRFLFSYGRFVPEKGLSQLLKVFAILKQRQPDLYLVLAGEGPSLSCYEKLAAAYNLKDRVMFLPFLNRKDIRTLLSHCEMAVFPSSYEPFGLAAQESMEQGVLTVVSQSGGFCDYAVHDKTAIIADFTLVQEAADLLDSFLKDREKARRIKEAGRQQVFKLHHPRLIMSSYLQLYERIFNNSAIH</sequence>
<dbReference type="EC" id="2.4.-.-"/>
<dbReference type="EMBL" id="D84432">
    <property type="protein sequence ID" value="BAA12516.1"/>
    <property type="molecule type" value="Genomic_DNA"/>
</dbReference>
<dbReference type="EMBL" id="AL009126">
    <property type="protein sequence ID" value="CAB14421.2"/>
    <property type="molecule type" value="Genomic_DNA"/>
</dbReference>
<dbReference type="PIR" id="G69956">
    <property type="entry name" value="G69956"/>
</dbReference>
<dbReference type="RefSeq" id="NP_390370.2">
    <property type="nucleotide sequence ID" value="NC_000964.3"/>
</dbReference>
<dbReference type="RefSeq" id="WP_009967743.1">
    <property type="nucleotide sequence ID" value="NZ_OZ025638.1"/>
</dbReference>
<dbReference type="SMR" id="P54490"/>
<dbReference type="FunCoup" id="P54490">
    <property type="interactions" value="62"/>
</dbReference>
<dbReference type="STRING" id="224308.BSU24910"/>
<dbReference type="CAZy" id="GT4">
    <property type="family name" value="Glycosyltransferase Family 4"/>
</dbReference>
<dbReference type="PaxDb" id="224308-BSU24910"/>
<dbReference type="DNASU" id="938207"/>
<dbReference type="EnsemblBacteria" id="CAB14421">
    <property type="protein sequence ID" value="CAB14421"/>
    <property type="gene ID" value="BSU_24910"/>
</dbReference>
<dbReference type="GeneID" id="938207"/>
<dbReference type="KEGG" id="bsu:BSU24910"/>
<dbReference type="PATRIC" id="fig|224308.179.peg.2710"/>
<dbReference type="eggNOG" id="COG0438">
    <property type="taxonomic scope" value="Bacteria"/>
</dbReference>
<dbReference type="InParanoid" id="P54490"/>
<dbReference type="OrthoDB" id="9803279at2"/>
<dbReference type="PhylomeDB" id="P54490"/>
<dbReference type="BioCyc" id="BSUB:BSU24910-MONOMER"/>
<dbReference type="Proteomes" id="UP000001570">
    <property type="component" value="Chromosome"/>
</dbReference>
<dbReference type="GO" id="GO:0016757">
    <property type="term" value="F:glycosyltransferase activity"/>
    <property type="evidence" value="ECO:0000318"/>
    <property type="project" value="GO_Central"/>
</dbReference>
<dbReference type="GO" id="GO:0009058">
    <property type="term" value="P:biosynthetic process"/>
    <property type="evidence" value="ECO:0007669"/>
    <property type="project" value="UniProtKB-ARBA"/>
</dbReference>
<dbReference type="CDD" id="cd03801">
    <property type="entry name" value="GT4_PimA-like"/>
    <property type="match status" value="1"/>
</dbReference>
<dbReference type="Gene3D" id="3.40.50.2000">
    <property type="entry name" value="Glycogen Phosphorylase B"/>
    <property type="match status" value="2"/>
</dbReference>
<dbReference type="InterPro" id="IPR001296">
    <property type="entry name" value="Glyco_trans_1"/>
</dbReference>
<dbReference type="InterPro" id="IPR028098">
    <property type="entry name" value="Glyco_trans_4-like_N"/>
</dbReference>
<dbReference type="PANTHER" id="PTHR12526">
    <property type="entry name" value="GLYCOSYLTRANSFERASE"/>
    <property type="match status" value="1"/>
</dbReference>
<dbReference type="PANTHER" id="PTHR12526:SF638">
    <property type="entry name" value="SPORE COAT PROTEIN SA"/>
    <property type="match status" value="1"/>
</dbReference>
<dbReference type="Pfam" id="PF13439">
    <property type="entry name" value="Glyco_transf_4"/>
    <property type="match status" value="1"/>
</dbReference>
<dbReference type="Pfam" id="PF00534">
    <property type="entry name" value="Glycos_transf_1"/>
    <property type="match status" value="1"/>
</dbReference>
<dbReference type="SUPFAM" id="SSF53756">
    <property type="entry name" value="UDP-Glycosyltransferase/glycogen phosphorylase"/>
    <property type="match status" value="1"/>
</dbReference>
<proteinExistence type="inferred from homology"/>
<accession>P54490</accession>
<organism>
    <name type="scientific">Bacillus subtilis (strain 168)</name>
    <dbReference type="NCBI Taxonomy" id="224308"/>
    <lineage>
        <taxon>Bacteria</taxon>
        <taxon>Bacillati</taxon>
        <taxon>Bacillota</taxon>
        <taxon>Bacilli</taxon>
        <taxon>Bacillales</taxon>
        <taxon>Bacillaceae</taxon>
        <taxon>Bacillus</taxon>
    </lineage>
</organism>
<gene>
    <name type="primary">yqgM</name>
    <name type="ordered locus">BSU24910</name>
</gene>
<feature type="chain" id="PRO_0000080316" description="Uncharacterized glycosyltransferase YqgM">
    <location>
        <begin position="1"/>
        <end position="359"/>
    </location>
</feature>
<feature type="sequence conflict" description="In Ref. 1; BAA12516." evidence="1" ref="1">
    <original>V</original>
    <variation>I</variation>
    <location>
        <position position="234"/>
    </location>
</feature>